<sequence>MYLKTLHLRHFRNYYDQKVEFTAAKTILVGNNAQGKSNLLEAVELLATLRSHRMARDRDFVQEEEPVAQINATLERDTGVSDLSLILRRNGRRTVALNGEPLRRQMDFLGVLNAVQFSSLDLELVRGSPEVRRNWLDTLLIQLEPVYAHILQQYNQVLRQRNAYLKKLQDSALTTQDSALAIWDAQLVTTGTKVIRRRDRALARLAPLATAWHTSISGSTEVLQINYTPNVQLVKNQPEEVQQAFLSQLQQRAVPEIYRGTTLVGPHRDEVELTINQTPARQYGSQGQQRTLVLALKLAELQLIEEVVKEPPLLLLDDVLAELDPSRQNQLLDTIQDRFQTLITTTHLSSFDAQWLNSSQILFVEQGKISTSNAVR</sequence>
<comment type="function">
    <text evidence="1">The RecF protein is involved in DNA metabolism; it is required for DNA replication and normal SOS inducibility. RecF binds preferentially to single-stranded, linear DNA. It also seems to bind ATP.</text>
</comment>
<comment type="subcellular location">
    <subcellularLocation>
        <location evidence="1">Cytoplasm</location>
    </subcellularLocation>
</comment>
<comment type="similarity">
    <text evidence="1">Belongs to the RecF family.</text>
</comment>
<gene>
    <name evidence="1" type="primary">recF</name>
    <name type="ordered locus">all3374</name>
</gene>
<feature type="chain" id="PRO_0000196392" description="DNA replication and repair protein RecF">
    <location>
        <begin position="1"/>
        <end position="376"/>
    </location>
</feature>
<feature type="binding site" evidence="1">
    <location>
        <begin position="30"/>
        <end position="37"/>
    </location>
    <ligand>
        <name>ATP</name>
        <dbReference type="ChEBI" id="CHEBI:30616"/>
    </ligand>
</feature>
<protein>
    <recommendedName>
        <fullName evidence="1">DNA replication and repair protein RecF</fullName>
    </recommendedName>
</protein>
<proteinExistence type="inferred from homology"/>
<reference key="1">
    <citation type="journal article" date="2001" name="DNA Res.">
        <title>Complete genomic sequence of the filamentous nitrogen-fixing cyanobacterium Anabaena sp. strain PCC 7120.</title>
        <authorList>
            <person name="Kaneko T."/>
            <person name="Nakamura Y."/>
            <person name="Wolk C.P."/>
            <person name="Kuritz T."/>
            <person name="Sasamoto S."/>
            <person name="Watanabe A."/>
            <person name="Iriguchi M."/>
            <person name="Ishikawa A."/>
            <person name="Kawashima K."/>
            <person name="Kimura T."/>
            <person name="Kishida Y."/>
            <person name="Kohara M."/>
            <person name="Matsumoto M."/>
            <person name="Matsuno A."/>
            <person name="Muraki A."/>
            <person name="Nakazaki N."/>
            <person name="Shimpo S."/>
            <person name="Sugimoto M."/>
            <person name="Takazawa M."/>
            <person name="Yamada M."/>
            <person name="Yasuda M."/>
            <person name="Tabata S."/>
        </authorList>
    </citation>
    <scope>NUCLEOTIDE SEQUENCE [LARGE SCALE GENOMIC DNA]</scope>
    <source>
        <strain>PCC 7120 / SAG 25.82 / UTEX 2576</strain>
    </source>
</reference>
<dbReference type="EMBL" id="BA000019">
    <property type="protein sequence ID" value="BAB75073.1"/>
    <property type="molecule type" value="Genomic_DNA"/>
</dbReference>
<dbReference type="PIR" id="AG2227">
    <property type="entry name" value="AG2227"/>
</dbReference>
<dbReference type="RefSeq" id="WP_010997525.1">
    <property type="nucleotide sequence ID" value="NZ_RSCN01000038.1"/>
</dbReference>
<dbReference type="SMR" id="Q8YRR9"/>
<dbReference type="STRING" id="103690.gene:10495412"/>
<dbReference type="KEGG" id="ana:all3374"/>
<dbReference type="eggNOG" id="COG1195">
    <property type="taxonomic scope" value="Bacteria"/>
</dbReference>
<dbReference type="OrthoDB" id="9803889at2"/>
<dbReference type="Proteomes" id="UP000002483">
    <property type="component" value="Chromosome"/>
</dbReference>
<dbReference type="GO" id="GO:0005737">
    <property type="term" value="C:cytoplasm"/>
    <property type="evidence" value="ECO:0007669"/>
    <property type="project" value="UniProtKB-SubCell"/>
</dbReference>
<dbReference type="GO" id="GO:0005524">
    <property type="term" value="F:ATP binding"/>
    <property type="evidence" value="ECO:0007669"/>
    <property type="project" value="UniProtKB-UniRule"/>
</dbReference>
<dbReference type="GO" id="GO:0003697">
    <property type="term" value="F:single-stranded DNA binding"/>
    <property type="evidence" value="ECO:0007669"/>
    <property type="project" value="UniProtKB-UniRule"/>
</dbReference>
<dbReference type="GO" id="GO:0006260">
    <property type="term" value="P:DNA replication"/>
    <property type="evidence" value="ECO:0007669"/>
    <property type="project" value="UniProtKB-UniRule"/>
</dbReference>
<dbReference type="GO" id="GO:0000731">
    <property type="term" value="P:DNA synthesis involved in DNA repair"/>
    <property type="evidence" value="ECO:0007669"/>
    <property type="project" value="TreeGrafter"/>
</dbReference>
<dbReference type="GO" id="GO:0006302">
    <property type="term" value="P:double-strand break repair"/>
    <property type="evidence" value="ECO:0007669"/>
    <property type="project" value="TreeGrafter"/>
</dbReference>
<dbReference type="GO" id="GO:0009432">
    <property type="term" value="P:SOS response"/>
    <property type="evidence" value="ECO:0007669"/>
    <property type="project" value="UniProtKB-UniRule"/>
</dbReference>
<dbReference type="CDD" id="cd03242">
    <property type="entry name" value="ABC_RecF"/>
    <property type="match status" value="1"/>
</dbReference>
<dbReference type="Gene3D" id="3.40.50.300">
    <property type="entry name" value="P-loop containing nucleotide triphosphate hydrolases"/>
    <property type="match status" value="1"/>
</dbReference>
<dbReference type="Gene3D" id="1.20.1050.90">
    <property type="entry name" value="RecF/RecN/SMC, N-terminal domain"/>
    <property type="match status" value="1"/>
</dbReference>
<dbReference type="HAMAP" id="MF_00365">
    <property type="entry name" value="RecF"/>
    <property type="match status" value="1"/>
</dbReference>
<dbReference type="InterPro" id="IPR001238">
    <property type="entry name" value="DNA-binding_RecF"/>
</dbReference>
<dbReference type="InterPro" id="IPR018078">
    <property type="entry name" value="DNA-binding_RecF_CS"/>
</dbReference>
<dbReference type="InterPro" id="IPR027417">
    <property type="entry name" value="P-loop_NTPase"/>
</dbReference>
<dbReference type="InterPro" id="IPR003395">
    <property type="entry name" value="RecF/RecN/SMC_N"/>
</dbReference>
<dbReference type="InterPro" id="IPR042174">
    <property type="entry name" value="RecF_2"/>
</dbReference>
<dbReference type="NCBIfam" id="TIGR00611">
    <property type="entry name" value="recf"/>
    <property type="match status" value="1"/>
</dbReference>
<dbReference type="PANTHER" id="PTHR32182">
    <property type="entry name" value="DNA REPLICATION AND REPAIR PROTEIN RECF"/>
    <property type="match status" value="1"/>
</dbReference>
<dbReference type="PANTHER" id="PTHR32182:SF0">
    <property type="entry name" value="DNA REPLICATION AND REPAIR PROTEIN RECF"/>
    <property type="match status" value="1"/>
</dbReference>
<dbReference type="Pfam" id="PF02463">
    <property type="entry name" value="SMC_N"/>
    <property type="match status" value="1"/>
</dbReference>
<dbReference type="SUPFAM" id="SSF52540">
    <property type="entry name" value="P-loop containing nucleoside triphosphate hydrolases"/>
    <property type="match status" value="1"/>
</dbReference>
<dbReference type="PROSITE" id="PS00617">
    <property type="entry name" value="RECF_1"/>
    <property type="match status" value="1"/>
</dbReference>
<dbReference type="PROSITE" id="PS00618">
    <property type="entry name" value="RECF_2"/>
    <property type="match status" value="1"/>
</dbReference>
<accession>Q8YRR9</accession>
<name>RECF_NOSS1</name>
<keyword id="KW-0067">ATP-binding</keyword>
<keyword id="KW-0963">Cytoplasm</keyword>
<keyword id="KW-0227">DNA damage</keyword>
<keyword id="KW-0234">DNA repair</keyword>
<keyword id="KW-0235">DNA replication</keyword>
<keyword id="KW-0238">DNA-binding</keyword>
<keyword id="KW-0547">Nucleotide-binding</keyword>
<keyword id="KW-1185">Reference proteome</keyword>
<keyword id="KW-0742">SOS response</keyword>
<evidence type="ECO:0000255" key="1">
    <source>
        <dbReference type="HAMAP-Rule" id="MF_00365"/>
    </source>
</evidence>
<organism>
    <name type="scientific">Nostoc sp. (strain PCC 7120 / SAG 25.82 / UTEX 2576)</name>
    <dbReference type="NCBI Taxonomy" id="103690"/>
    <lineage>
        <taxon>Bacteria</taxon>
        <taxon>Bacillati</taxon>
        <taxon>Cyanobacteriota</taxon>
        <taxon>Cyanophyceae</taxon>
        <taxon>Nostocales</taxon>
        <taxon>Nostocaceae</taxon>
        <taxon>Nostoc</taxon>
    </lineage>
</organism>